<organism>
    <name type="scientific">Caenorhabditis briggsae</name>
    <dbReference type="NCBI Taxonomy" id="6238"/>
    <lineage>
        <taxon>Eukaryota</taxon>
        <taxon>Metazoa</taxon>
        <taxon>Ecdysozoa</taxon>
        <taxon>Nematoda</taxon>
        <taxon>Chromadorea</taxon>
        <taxon>Rhabditida</taxon>
        <taxon>Rhabditina</taxon>
        <taxon>Rhabditomorpha</taxon>
        <taxon>Rhabditoidea</taxon>
        <taxon>Rhabditidae</taxon>
        <taxon>Peloderinae</taxon>
        <taxon>Caenorhabditis</taxon>
    </lineage>
</organism>
<feature type="chain" id="PRO_0000373906" description="Protein arginine N-methyltransferase 7">
    <location>
        <begin position="1"/>
        <end position="656"/>
    </location>
</feature>
<feature type="domain" description="SAM-dependent MTase PRMT-type 1" evidence="2">
    <location>
        <begin position="12"/>
        <end position="338"/>
    </location>
</feature>
<feature type="domain" description="SAM-dependent MTase PRMT-type 2" evidence="2">
    <location>
        <begin position="343"/>
        <end position="656"/>
    </location>
</feature>
<keyword id="KW-0489">Methyltransferase</keyword>
<keyword id="KW-1185">Reference proteome</keyword>
<keyword id="KW-0677">Repeat</keyword>
<keyword id="KW-0949">S-adenosyl-L-methionine</keyword>
<keyword id="KW-0808">Transferase</keyword>
<sequence>MFLERVNQKTGEREWVVAQEDYDMAQELARSRFGDMILDFDRNDKFLEGLKTTIPEKKKENGDGLVHVLDIANITFPGTGTGLLSLMAAREGADKVTALEVFKPMGDCARHITGCSPWAEKITVISERSTDVSQIGGTAADIIVAEVFDTELIGEGALRTFKEALQRLAKPGCRVVPSSGNVYIVPVESHLLKMFNTIPRINGGEDEHPLGTCSGTASVFDVQLSELETHEFRELAEPIVAFKFDFENEEKIIYNESFVREAIAHTSGTIDAIMMWWDIDMDGKGETFIDMAPRWKNPKHYAWRDHWMQAVYYLPDKKCVEKAQKFEIICNHDEFSIWFSDVGKDSTRSYCVCGLHSMLSRQTVYHINEMFEDQSFRAEVDRLSSGLNVVTVGEGSFVGLLAAKTAKTVTIIEPNERFRDIFHKYVLYYNMKNVHIVEKVTHLIEKPDIVIAEPFYMSAMNPWNHLRFLYDVEILKMLHGDDLKVEPHLGTLKAIPECFEDLHKIAADVNTVNGFDLSYFDRISTKARAATDAIVDEQSLWEYAGTVKGEPVELLTFPVDGRILSRKCVGKMDNMQSSNGIPIWMEWQFGDLTLSTGLLSTSESRKPCWNKGYKQGVYFPITNLQNESSINLNALFDKSSGDITFQFKKFDVQSGN</sequence>
<evidence type="ECO:0000250" key="1"/>
<evidence type="ECO:0000255" key="2">
    <source>
        <dbReference type="PROSITE-ProRule" id="PRU01015"/>
    </source>
</evidence>
<name>ANM7_CAEBR</name>
<protein>
    <recommendedName>
        <fullName>Protein arginine N-methyltransferase 7</fullName>
        <ecNumber>2.1.1.-</ecNumber>
    </recommendedName>
</protein>
<dbReference type="EC" id="2.1.1.-"/>
<dbReference type="EMBL" id="HE600913">
    <property type="protein sequence ID" value="CAP31415.2"/>
    <property type="molecule type" value="Genomic_DNA"/>
</dbReference>
<dbReference type="SMR" id="A8XFF4"/>
<dbReference type="FunCoup" id="A8XFF4">
    <property type="interactions" value="2635"/>
</dbReference>
<dbReference type="STRING" id="6238.A8XFF4"/>
<dbReference type="WormBase" id="CBG12433">
    <property type="protein sequence ID" value="CBP09075"/>
    <property type="gene ID" value="WBGene00033385"/>
    <property type="gene designation" value="Cbr-prmt-7"/>
</dbReference>
<dbReference type="eggNOG" id="KOG1501">
    <property type="taxonomic scope" value="Eukaryota"/>
</dbReference>
<dbReference type="HOGENOM" id="CLU_015180_0_0_1"/>
<dbReference type="InParanoid" id="A8XFF4"/>
<dbReference type="OMA" id="CHHDEYS"/>
<dbReference type="Proteomes" id="UP000008549">
    <property type="component" value="Unassembled WGS sequence"/>
</dbReference>
<dbReference type="GO" id="GO:0042054">
    <property type="term" value="F:histone methyltransferase activity"/>
    <property type="evidence" value="ECO:0000318"/>
    <property type="project" value="GO_Central"/>
</dbReference>
<dbReference type="GO" id="GO:0016274">
    <property type="term" value="F:protein-arginine N-methyltransferase activity"/>
    <property type="evidence" value="ECO:0000318"/>
    <property type="project" value="GO_Central"/>
</dbReference>
<dbReference type="GO" id="GO:0006338">
    <property type="term" value="P:chromatin remodeling"/>
    <property type="evidence" value="ECO:0000318"/>
    <property type="project" value="GO_Central"/>
</dbReference>
<dbReference type="GO" id="GO:0032259">
    <property type="term" value="P:methylation"/>
    <property type="evidence" value="ECO:0007669"/>
    <property type="project" value="UniProtKB-KW"/>
</dbReference>
<dbReference type="GO" id="GO:0006355">
    <property type="term" value="P:regulation of DNA-templated transcription"/>
    <property type="evidence" value="ECO:0000318"/>
    <property type="project" value="GO_Central"/>
</dbReference>
<dbReference type="CDD" id="cd02440">
    <property type="entry name" value="AdoMet_MTases"/>
    <property type="match status" value="1"/>
</dbReference>
<dbReference type="FunFam" id="2.70.160.11:FF:000014">
    <property type="entry name" value="Protein arginine N-methyltransferase 7"/>
    <property type="match status" value="1"/>
</dbReference>
<dbReference type="FunFam" id="2.70.160.11:FF:000037">
    <property type="entry name" value="Protein arginine N-methyltransferase 7"/>
    <property type="match status" value="1"/>
</dbReference>
<dbReference type="FunFam" id="3.40.50.150:FF:000599">
    <property type="entry name" value="Protein arginine N-methyltransferase 7"/>
    <property type="match status" value="1"/>
</dbReference>
<dbReference type="FunFam" id="3.40.50.150:FF:000774">
    <property type="entry name" value="Protein arginine N-methyltransferase 7"/>
    <property type="match status" value="1"/>
</dbReference>
<dbReference type="Gene3D" id="2.70.160.11">
    <property type="entry name" value="Hnrnp arginine n-methyltransferase1"/>
    <property type="match status" value="2"/>
</dbReference>
<dbReference type="Gene3D" id="3.40.50.150">
    <property type="entry name" value="Vaccinia Virus protein VP39"/>
    <property type="match status" value="2"/>
</dbReference>
<dbReference type="InterPro" id="IPR025799">
    <property type="entry name" value="Arg_MeTrfase"/>
</dbReference>
<dbReference type="InterPro" id="IPR014644">
    <property type="entry name" value="MeTrfase_PRMT7"/>
</dbReference>
<dbReference type="InterPro" id="IPR055135">
    <property type="entry name" value="PRMT_dom"/>
</dbReference>
<dbReference type="InterPro" id="IPR029063">
    <property type="entry name" value="SAM-dependent_MTases_sf"/>
</dbReference>
<dbReference type="PANTHER" id="PTHR11006">
    <property type="entry name" value="PROTEIN ARGININE N-METHYLTRANSFERASE"/>
    <property type="match status" value="1"/>
</dbReference>
<dbReference type="PANTHER" id="PTHR11006:SF4">
    <property type="entry name" value="PROTEIN ARGININE N-METHYLTRANSFERASE 7"/>
    <property type="match status" value="1"/>
</dbReference>
<dbReference type="Pfam" id="PF22528">
    <property type="entry name" value="PRMT_C"/>
    <property type="match status" value="1"/>
</dbReference>
<dbReference type="PIRSF" id="PIRSF036946">
    <property type="entry name" value="Arg_N-mtase"/>
    <property type="match status" value="1"/>
</dbReference>
<dbReference type="SUPFAM" id="SSF53335">
    <property type="entry name" value="S-adenosyl-L-methionine-dependent methyltransferases"/>
    <property type="match status" value="2"/>
</dbReference>
<dbReference type="PROSITE" id="PS51678">
    <property type="entry name" value="SAM_MT_PRMT"/>
    <property type="match status" value="2"/>
</dbReference>
<accession>A8XFF4</accession>
<reference key="1">
    <citation type="journal article" date="2003" name="PLoS Biol.">
        <title>The genome sequence of Caenorhabditis briggsae: a platform for comparative genomics.</title>
        <authorList>
            <person name="Stein L.D."/>
            <person name="Bao Z."/>
            <person name="Blasiar D."/>
            <person name="Blumenthal T."/>
            <person name="Brent M.R."/>
            <person name="Chen N."/>
            <person name="Chinwalla A."/>
            <person name="Clarke L."/>
            <person name="Clee C."/>
            <person name="Coghlan A."/>
            <person name="Coulson A."/>
            <person name="D'Eustachio P."/>
            <person name="Fitch D.H.A."/>
            <person name="Fulton L.A."/>
            <person name="Fulton R.E."/>
            <person name="Griffiths-Jones S."/>
            <person name="Harris T.W."/>
            <person name="Hillier L.W."/>
            <person name="Kamath R."/>
            <person name="Kuwabara P.E."/>
            <person name="Mardis E.R."/>
            <person name="Marra M.A."/>
            <person name="Miner T.L."/>
            <person name="Minx P."/>
            <person name="Mullikin J.C."/>
            <person name="Plumb R.W."/>
            <person name="Rogers J."/>
            <person name="Schein J.E."/>
            <person name="Sohrmann M."/>
            <person name="Spieth J."/>
            <person name="Stajich J.E."/>
            <person name="Wei C."/>
            <person name="Willey D."/>
            <person name="Wilson R.K."/>
            <person name="Durbin R.M."/>
            <person name="Waterston R.H."/>
        </authorList>
    </citation>
    <scope>NUCLEOTIDE SEQUENCE [LARGE SCALE GENOMIC DNA]</scope>
    <source>
        <strain>AF16</strain>
    </source>
</reference>
<comment type="function">
    <text evidence="1">Arginine methyltransferase that can both catalyze the formation of omega-N monomethylarginine (MMA) and symmetrical dimethylarginine (sDMA).</text>
</comment>
<comment type="similarity">
    <text evidence="2">Belongs to the class I-like SAM-binding methyltransferase superfamily. Protein arginine N-methyltransferase family. PRMT7 subfamily.</text>
</comment>
<gene>
    <name type="primary">prmt-7</name>
    <name type="ORF">CBG12433</name>
</gene>
<proteinExistence type="inferred from homology"/>